<proteinExistence type="inferred from homology"/>
<dbReference type="EMBL" id="AF380191">
    <property type="protein sequence ID" value="AAK71242.1"/>
    <property type="molecule type" value="Genomic_DNA"/>
</dbReference>
<dbReference type="RefSeq" id="NP_783174.1">
    <property type="nucleotide sequence ID" value="NM_175584.1"/>
</dbReference>
<dbReference type="SMR" id="Q923Y5"/>
<dbReference type="FunCoup" id="Q923Y5">
    <property type="interactions" value="32"/>
</dbReference>
<dbReference type="STRING" id="10116.ENSRNOP00000070620"/>
<dbReference type="GlyCosmos" id="Q923Y5">
    <property type="glycosylation" value="1 site, No reported glycans"/>
</dbReference>
<dbReference type="GlyGen" id="Q923Y5">
    <property type="glycosylation" value="1 site"/>
</dbReference>
<dbReference type="PhosphoSitePlus" id="Q923Y5"/>
<dbReference type="Ensembl" id="ENSRNOT00000021529.5">
    <property type="protein sequence ID" value="ENSRNOP00000070620.1"/>
    <property type="gene ID" value="ENSRNOG00000016089.5"/>
</dbReference>
<dbReference type="GeneID" id="294124"/>
<dbReference type="KEGG" id="rno:294124"/>
<dbReference type="AGR" id="RGD:631384"/>
<dbReference type="CTD" id="319100"/>
<dbReference type="RGD" id="631384">
    <property type="gene designation" value="Taar6"/>
</dbReference>
<dbReference type="GeneTree" id="ENSGT00940000161306"/>
<dbReference type="HOGENOM" id="CLU_009579_11_0_1"/>
<dbReference type="InParanoid" id="Q923Y5"/>
<dbReference type="OMA" id="MIILYGN"/>
<dbReference type="OrthoDB" id="5959645at2759"/>
<dbReference type="PhylomeDB" id="Q923Y5"/>
<dbReference type="Reactome" id="R-RNO-375280">
    <property type="pathway name" value="Amine ligand-binding receptors"/>
</dbReference>
<dbReference type="PRO" id="PR:Q923Y5"/>
<dbReference type="Proteomes" id="UP000002494">
    <property type="component" value="Chromosome 1"/>
</dbReference>
<dbReference type="GO" id="GO:0005886">
    <property type="term" value="C:plasma membrane"/>
    <property type="evidence" value="ECO:0000250"/>
    <property type="project" value="UniProtKB"/>
</dbReference>
<dbReference type="GO" id="GO:0001594">
    <property type="term" value="F:trace-amine receptor activity"/>
    <property type="evidence" value="ECO:0000250"/>
    <property type="project" value="UniProtKB"/>
</dbReference>
<dbReference type="GO" id="GO:0007189">
    <property type="term" value="P:adenylate cyclase-activating G protein-coupled receptor signaling pathway"/>
    <property type="evidence" value="ECO:0000250"/>
    <property type="project" value="UniProtKB"/>
</dbReference>
<dbReference type="GO" id="GO:0007186">
    <property type="term" value="P:G protein-coupled receptor signaling pathway"/>
    <property type="evidence" value="ECO:0000318"/>
    <property type="project" value="GO_Central"/>
</dbReference>
<dbReference type="CDD" id="cd15316">
    <property type="entry name" value="7tmA_TAAR6_8_9"/>
    <property type="match status" value="1"/>
</dbReference>
<dbReference type="FunFam" id="1.20.1070.10:FF:000030">
    <property type="entry name" value="trace amine-associated receptor 1"/>
    <property type="match status" value="1"/>
</dbReference>
<dbReference type="Gene3D" id="1.20.1070.10">
    <property type="entry name" value="Rhodopsin 7-helix transmembrane proteins"/>
    <property type="match status" value="1"/>
</dbReference>
<dbReference type="InterPro" id="IPR000276">
    <property type="entry name" value="GPCR_Rhodpsn"/>
</dbReference>
<dbReference type="InterPro" id="IPR017452">
    <property type="entry name" value="GPCR_Rhodpsn_7TM"/>
</dbReference>
<dbReference type="InterPro" id="IPR050569">
    <property type="entry name" value="TAAR"/>
</dbReference>
<dbReference type="InterPro" id="IPR009132">
    <property type="entry name" value="TAAR_fam"/>
</dbReference>
<dbReference type="PANTHER" id="PTHR24249">
    <property type="entry name" value="HISTAMINE RECEPTOR-RELATED G-PROTEIN COUPLED RECEPTOR"/>
    <property type="match status" value="1"/>
</dbReference>
<dbReference type="PANTHER" id="PTHR24249:SF271">
    <property type="entry name" value="TRACE AMINE-ASSOCIATED RECEPTOR 6"/>
    <property type="match status" value="1"/>
</dbReference>
<dbReference type="Pfam" id="PF00001">
    <property type="entry name" value="7tm_1"/>
    <property type="match status" value="1"/>
</dbReference>
<dbReference type="PRINTS" id="PR00237">
    <property type="entry name" value="GPCRRHODOPSN"/>
</dbReference>
<dbReference type="PRINTS" id="PR01830">
    <property type="entry name" value="TRACEAMINER"/>
</dbReference>
<dbReference type="SMART" id="SM01381">
    <property type="entry name" value="7TM_GPCR_Srsx"/>
    <property type="match status" value="1"/>
</dbReference>
<dbReference type="SUPFAM" id="SSF81321">
    <property type="entry name" value="Family A G protein-coupled receptor-like"/>
    <property type="match status" value="1"/>
</dbReference>
<dbReference type="PROSITE" id="PS00237">
    <property type="entry name" value="G_PROTEIN_RECEP_F1_1"/>
    <property type="match status" value="1"/>
</dbReference>
<dbReference type="PROSITE" id="PS50262">
    <property type="entry name" value="G_PROTEIN_RECEP_F1_2"/>
    <property type="match status" value="1"/>
</dbReference>
<reference key="1">
    <citation type="journal article" date="2001" name="Proc. Natl. Acad. Sci. U.S.A.">
        <title>Trace amines: identification of a family of mammalian G protein-coupled receptors.</title>
        <authorList>
            <person name="Borowsky B."/>
            <person name="Adham N."/>
            <person name="Jones K.A."/>
            <person name="Raddatz R."/>
            <person name="Artymyshyn R."/>
            <person name="Ogozalek K.L."/>
            <person name="Durkin M.M."/>
            <person name="Lakhlani P.P."/>
            <person name="Bonini J.A."/>
            <person name="Pathirana S."/>
            <person name="Boyle N."/>
            <person name="Pu X."/>
            <person name="Kouranova E."/>
            <person name="Lichtblau H."/>
            <person name="Ochoa F.Y."/>
            <person name="Branchek T.A."/>
            <person name="Gerald C."/>
        </authorList>
    </citation>
    <scope>NUCLEOTIDE SEQUENCE [GENOMIC DNA]</scope>
    <source>
        <strain>Sprague-Dawley</strain>
    </source>
</reference>
<keyword id="KW-1003">Cell membrane</keyword>
<keyword id="KW-1015">Disulfide bond</keyword>
<keyword id="KW-0297">G-protein coupled receptor</keyword>
<keyword id="KW-0325">Glycoprotein</keyword>
<keyword id="KW-0472">Membrane</keyword>
<keyword id="KW-0675">Receptor</keyword>
<keyword id="KW-1185">Reference proteome</keyword>
<keyword id="KW-0807">Transducer</keyword>
<keyword id="KW-0812">Transmembrane</keyword>
<keyword id="KW-1133">Transmembrane helix</keyword>
<organism>
    <name type="scientific">Rattus norvegicus</name>
    <name type="common">Rat</name>
    <dbReference type="NCBI Taxonomy" id="10116"/>
    <lineage>
        <taxon>Eukaryota</taxon>
        <taxon>Metazoa</taxon>
        <taxon>Chordata</taxon>
        <taxon>Craniata</taxon>
        <taxon>Vertebrata</taxon>
        <taxon>Euteleostomi</taxon>
        <taxon>Mammalia</taxon>
        <taxon>Eutheria</taxon>
        <taxon>Euarchontoglires</taxon>
        <taxon>Glires</taxon>
        <taxon>Rodentia</taxon>
        <taxon>Myomorpha</taxon>
        <taxon>Muroidea</taxon>
        <taxon>Muridae</taxon>
        <taxon>Murinae</taxon>
        <taxon>Rattus</taxon>
    </lineage>
</organism>
<comment type="function">
    <text evidence="2">Olfactory receptor specific for trace amines, such as beta-phenylethylamine (beta-PEA). Trace amine compounds are enriched in animal body fluids and act on trace amine-associated receptors (TAARs) to elicit both intraspecific and interspecific innate behaviors. Beta-PEA-binding causes a conformation change that triggers signaling via G(s)-class of G alpha proteins (GNAL or GNAS).</text>
</comment>
<comment type="subcellular location">
    <subcellularLocation>
        <location evidence="3">Cell membrane</location>
        <topology evidence="4">Multi-pass membrane protein</topology>
    </subcellularLocation>
</comment>
<comment type="domain">
    <text evidence="1">In addition to the well known disulfide bond common to G-protein coupled receptor 1 family, trace amine-associated receptors (TAARs) contain an unique disulfide bond (Cys-22-Cys-186) connecting the N-terminus to the extracellular Loop 2 (ECL2), which is required for agonist-induced receptor activation.</text>
</comment>
<comment type="similarity">
    <text evidence="5">Belongs to the G-protein coupled receptor 1 family.</text>
</comment>
<gene>
    <name type="primary">Taar6</name>
    <name type="synonym">Ta4</name>
    <name type="synonym">Tar4</name>
    <name type="synonym">Trar4</name>
</gene>
<evidence type="ECO:0000250" key="1">
    <source>
        <dbReference type="UniProtKB" id="Q5QD04"/>
    </source>
</evidence>
<evidence type="ECO:0000250" key="2">
    <source>
        <dbReference type="UniProtKB" id="Q5QD13"/>
    </source>
</evidence>
<evidence type="ECO:0000250" key="3">
    <source>
        <dbReference type="UniProtKB" id="Q96RI8"/>
    </source>
</evidence>
<evidence type="ECO:0000255" key="4"/>
<evidence type="ECO:0000255" key="5">
    <source>
        <dbReference type="PROSITE-ProRule" id="PRU00521"/>
    </source>
</evidence>
<sequence>MGSNSSPPAVLQLCYENVNGSCVKTPYSPGPRVLLYAVFGFGAVLAVFGNLLVMISILHFKQLHSPTNFLIASLACADFWVGVSVMPFSMVRSIESCWYFGRSFCTFHTCCDVAFCYSSLFHLSFISIDRYIAVTDPLVYPTKFTVSVSGICISISWILPLAYSGAVFYTGVYADGLEEVSDAVNCVGGCQVVVNQNWVLIDFLSFLIPTLVMIILYGNIFLVARQQAKKIETVGNKAESSSESYKARVARRERKAAKTLGITVVAFMISWLPYSIDSLVDAFMGFITPAYIYEICVWCAYYNSAMNPLIYALFYPWFKKAIKVIMSGQVFKNSSATMNLFSEQI</sequence>
<name>TAAR6_RAT</name>
<accession>Q923Y5</accession>
<feature type="chain" id="PRO_0000070161" description="Trace amine-associated receptor 6">
    <location>
        <begin position="1"/>
        <end position="345"/>
    </location>
</feature>
<feature type="topological domain" description="Extracellular" evidence="4">
    <location>
        <begin position="1"/>
        <end position="32"/>
    </location>
</feature>
<feature type="transmembrane region" description="Helical; Name=1" evidence="4">
    <location>
        <begin position="33"/>
        <end position="53"/>
    </location>
</feature>
<feature type="topological domain" description="Cytoplasmic" evidence="4">
    <location>
        <begin position="54"/>
        <end position="68"/>
    </location>
</feature>
<feature type="transmembrane region" description="Helical; Name=2" evidence="4">
    <location>
        <begin position="69"/>
        <end position="89"/>
    </location>
</feature>
<feature type="topological domain" description="Extracellular" evidence="4">
    <location>
        <begin position="90"/>
        <end position="107"/>
    </location>
</feature>
<feature type="transmembrane region" description="Helical; Name=3" evidence="4">
    <location>
        <begin position="108"/>
        <end position="128"/>
    </location>
</feature>
<feature type="topological domain" description="Cytoplasmic" evidence="4">
    <location>
        <begin position="129"/>
        <end position="147"/>
    </location>
</feature>
<feature type="transmembrane region" description="Helical; Name=4" evidence="4">
    <location>
        <begin position="148"/>
        <end position="168"/>
    </location>
</feature>
<feature type="topological domain" description="Extracellular" evidence="4">
    <location>
        <begin position="169"/>
        <end position="202"/>
    </location>
</feature>
<feature type="transmembrane region" description="Helical; Name=5" evidence="4">
    <location>
        <begin position="203"/>
        <end position="223"/>
    </location>
</feature>
<feature type="topological domain" description="Cytoplasmic" evidence="4">
    <location>
        <begin position="224"/>
        <end position="259"/>
    </location>
</feature>
<feature type="transmembrane region" description="Helical; Name=6" evidence="4">
    <location>
        <begin position="260"/>
        <end position="276"/>
    </location>
</feature>
<feature type="topological domain" description="Extracellular" evidence="4">
    <location>
        <begin position="277"/>
        <end position="282"/>
    </location>
</feature>
<feature type="transmembrane region" description="Helical; Name=7" evidence="4">
    <location>
        <begin position="283"/>
        <end position="302"/>
    </location>
</feature>
<feature type="topological domain" description="Cytoplasmic" evidence="4">
    <location>
        <begin position="303"/>
        <end position="345"/>
    </location>
</feature>
<feature type="glycosylation site" description="N-linked (GlcNAc...) asparagine" evidence="4">
    <location>
        <position position="19"/>
    </location>
</feature>
<feature type="disulfide bond" evidence="1">
    <location>
        <begin position="22"/>
        <end position="186"/>
    </location>
</feature>
<feature type="disulfide bond" evidence="5">
    <location>
        <begin position="105"/>
        <end position="190"/>
    </location>
</feature>
<protein>
    <recommendedName>
        <fullName>Trace amine-associated receptor 6</fullName>
        <shortName>TaR-6</shortName>
        <shortName>Trace amine receptor 6</shortName>
    </recommendedName>
    <alternativeName>
        <fullName>Trace amine receptor 4</fullName>
        <shortName>TaR-4</shortName>
    </alternativeName>
</protein>